<name>RF1_JANMA</name>
<feature type="chain" id="PRO_1000004898" description="Peptide chain release factor 1">
    <location>
        <begin position="1"/>
        <end position="360"/>
    </location>
</feature>
<feature type="modified residue" description="N5-methylglutamine" evidence="1">
    <location>
        <position position="235"/>
    </location>
</feature>
<keyword id="KW-0963">Cytoplasm</keyword>
<keyword id="KW-0488">Methylation</keyword>
<keyword id="KW-0648">Protein biosynthesis</keyword>
<dbReference type="EMBL" id="CP000269">
    <property type="protein sequence ID" value="ABR88624.1"/>
    <property type="molecule type" value="Genomic_DNA"/>
</dbReference>
<dbReference type="RefSeq" id="WP_011979439.1">
    <property type="nucleotide sequence ID" value="NC_009659.1"/>
</dbReference>
<dbReference type="SMR" id="A6SUF6"/>
<dbReference type="STRING" id="375286.mma_0213"/>
<dbReference type="KEGG" id="mms:mma_0213"/>
<dbReference type="eggNOG" id="COG0216">
    <property type="taxonomic scope" value="Bacteria"/>
</dbReference>
<dbReference type="HOGENOM" id="CLU_036856_0_1_4"/>
<dbReference type="OrthoDB" id="9806673at2"/>
<dbReference type="Proteomes" id="UP000006388">
    <property type="component" value="Chromosome"/>
</dbReference>
<dbReference type="GO" id="GO:0005737">
    <property type="term" value="C:cytoplasm"/>
    <property type="evidence" value="ECO:0007669"/>
    <property type="project" value="UniProtKB-SubCell"/>
</dbReference>
<dbReference type="GO" id="GO:0016149">
    <property type="term" value="F:translation release factor activity, codon specific"/>
    <property type="evidence" value="ECO:0007669"/>
    <property type="project" value="UniProtKB-UniRule"/>
</dbReference>
<dbReference type="FunFam" id="3.30.160.20:FF:000004">
    <property type="entry name" value="Peptide chain release factor 1"/>
    <property type="match status" value="1"/>
</dbReference>
<dbReference type="FunFam" id="3.30.70.1660:FF:000002">
    <property type="entry name" value="Peptide chain release factor 1"/>
    <property type="match status" value="1"/>
</dbReference>
<dbReference type="FunFam" id="3.30.70.1660:FF:000004">
    <property type="entry name" value="Peptide chain release factor 1"/>
    <property type="match status" value="1"/>
</dbReference>
<dbReference type="Gene3D" id="3.30.160.20">
    <property type="match status" value="1"/>
</dbReference>
<dbReference type="Gene3D" id="3.30.70.1660">
    <property type="match status" value="1"/>
</dbReference>
<dbReference type="Gene3D" id="6.10.140.1950">
    <property type="match status" value="1"/>
</dbReference>
<dbReference type="HAMAP" id="MF_00093">
    <property type="entry name" value="Rel_fac_1"/>
    <property type="match status" value="1"/>
</dbReference>
<dbReference type="InterPro" id="IPR005139">
    <property type="entry name" value="PCRF"/>
</dbReference>
<dbReference type="InterPro" id="IPR000352">
    <property type="entry name" value="Pep_chain_release_fac_I"/>
</dbReference>
<dbReference type="InterPro" id="IPR045853">
    <property type="entry name" value="Pep_chain_release_fac_I_sf"/>
</dbReference>
<dbReference type="InterPro" id="IPR050057">
    <property type="entry name" value="Prokaryotic/Mito_RF"/>
</dbReference>
<dbReference type="InterPro" id="IPR004373">
    <property type="entry name" value="RF-1"/>
</dbReference>
<dbReference type="NCBIfam" id="TIGR00019">
    <property type="entry name" value="prfA"/>
    <property type="match status" value="1"/>
</dbReference>
<dbReference type="NCBIfam" id="NF001859">
    <property type="entry name" value="PRK00591.1"/>
    <property type="match status" value="1"/>
</dbReference>
<dbReference type="PANTHER" id="PTHR43804">
    <property type="entry name" value="LD18447P"/>
    <property type="match status" value="1"/>
</dbReference>
<dbReference type="PANTHER" id="PTHR43804:SF7">
    <property type="entry name" value="LD18447P"/>
    <property type="match status" value="1"/>
</dbReference>
<dbReference type="Pfam" id="PF03462">
    <property type="entry name" value="PCRF"/>
    <property type="match status" value="1"/>
</dbReference>
<dbReference type="Pfam" id="PF00472">
    <property type="entry name" value="RF-1"/>
    <property type="match status" value="1"/>
</dbReference>
<dbReference type="SMART" id="SM00937">
    <property type="entry name" value="PCRF"/>
    <property type="match status" value="1"/>
</dbReference>
<dbReference type="SUPFAM" id="SSF75620">
    <property type="entry name" value="Release factor"/>
    <property type="match status" value="1"/>
</dbReference>
<dbReference type="PROSITE" id="PS00745">
    <property type="entry name" value="RF_PROK_I"/>
    <property type="match status" value="1"/>
</dbReference>
<proteinExistence type="inferred from homology"/>
<reference key="1">
    <citation type="journal article" date="2007" name="PLoS Genet.">
        <title>Genome analysis of Minibacterium massiliensis highlights the convergent evolution of water-living bacteria.</title>
        <authorList>
            <person name="Audic S."/>
            <person name="Robert C."/>
            <person name="Campagna B."/>
            <person name="Parinello H."/>
            <person name="Claverie J.-M."/>
            <person name="Raoult D."/>
            <person name="Drancourt M."/>
        </authorList>
    </citation>
    <scope>NUCLEOTIDE SEQUENCE [LARGE SCALE GENOMIC DNA]</scope>
    <source>
        <strain>Marseille</strain>
    </source>
</reference>
<accession>A6SUF6</accession>
<organism>
    <name type="scientific">Janthinobacterium sp. (strain Marseille)</name>
    <name type="common">Minibacterium massiliensis</name>
    <dbReference type="NCBI Taxonomy" id="375286"/>
    <lineage>
        <taxon>Bacteria</taxon>
        <taxon>Pseudomonadati</taxon>
        <taxon>Pseudomonadota</taxon>
        <taxon>Betaproteobacteria</taxon>
        <taxon>Burkholderiales</taxon>
        <taxon>Oxalobacteraceae</taxon>
        <taxon>Janthinobacterium</taxon>
    </lineage>
</organism>
<protein>
    <recommendedName>
        <fullName evidence="1">Peptide chain release factor 1</fullName>
        <shortName evidence="1">RF-1</shortName>
    </recommendedName>
</protein>
<sequence length="360" mass="40225">MKPSMLAKLDQLTERLDELNVLLMQEDATSNMDNYRKMTREHAELGPLVALYGNYRQADSDIQDAQGMLSDPDMKEFAQEEIAAAKTRMEQLEIDLQKMLLPKDPNDDRNIFLEIRAGTGGDEAALFAGDLLRMYSRFAERNRWQIEMVSESASEVGGYKEVIVRIIGFGAYSKLKFESGGHRVQRVPATETQGRIHTSACTVAIMPEADEVEDVNINPADLRIDTYRASGAGGQHINKTDSAVRITHIPTGIVVECQDDRSQHKNKASALKVLAARIKDVQLREQQSKEAATRKSLIGSGDRSERIRTYNFPQGRMTDHRINLTLYKLDFIMDGDLTELTNALAAEHQAELLAALGDAN</sequence>
<gene>
    <name evidence="1" type="primary">prfA</name>
    <name type="ordered locus">mma_0213</name>
</gene>
<evidence type="ECO:0000255" key="1">
    <source>
        <dbReference type="HAMAP-Rule" id="MF_00093"/>
    </source>
</evidence>
<comment type="function">
    <text evidence="1">Peptide chain release factor 1 directs the termination of translation in response to the peptide chain termination codons UAG and UAA.</text>
</comment>
<comment type="subcellular location">
    <subcellularLocation>
        <location evidence="1">Cytoplasm</location>
    </subcellularLocation>
</comment>
<comment type="PTM">
    <text evidence="1">Methylated by PrmC. Methylation increases the termination efficiency of RF1.</text>
</comment>
<comment type="similarity">
    <text evidence="1">Belongs to the prokaryotic/mitochondrial release factor family.</text>
</comment>